<evidence type="ECO:0000255" key="1">
    <source>
        <dbReference type="HAMAP-Rule" id="MF_01864"/>
    </source>
</evidence>
<evidence type="ECO:0000255" key="2">
    <source>
        <dbReference type="PROSITE-ProRule" id="PRU01266"/>
    </source>
</evidence>
<organism>
    <name type="scientific">Bacteroides fragilis (strain ATCC 25285 / DSM 2151 / CCUG 4856 / JCM 11019 / LMG 10263 / NCTC 9343 / Onslow / VPI 2553 / EN-2)</name>
    <dbReference type="NCBI Taxonomy" id="272559"/>
    <lineage>
        <taxon>Bacteria</taxon>
        <taxon>Pseudomonadati</taxon>
        <taxon>Bacteroidota</taxon>
        <taxon>Bacteroidia</taxon>
        <taxon>Bacteroidales</taxon>
        <taxon>Bacteroidaceae</taxon>
        <taxon>Bacteroides</taxon>
    </lineage>
</organism>
<dbReference type="EC" id="2.8.4.3" evidence="1"/>
<dbReference type="EMBL" id="CR626927">
    <property type="protein sequence ID" value="CAH05806.1"/>
    <property type="molecule type" value="Genomic_DNA"/>
</dbReference>
<dbReference type="RefSeq" id="WP_005783584.1">
    <property type="nucleotide sequence ID" value="NZ_UFTH01000001.1"/>
</dbReference>
<dbReference type="SMR" id="Q5LJ70"/>
<dbReference type="PaxDb" id="272559-BF9343_0027"/>
<dbReference type="GeneID" id="60368234"/>
<dbReference type="KEGG" id="bfs:BF9343_0027"/>
<dbReference type="eggNOG" id="COG0621">
    <property type="taxonomic scope" value="Bacteria"/>
</dbReference>
<dbReference type="HOGENOM" id="CLU_018697_2_0_10"/>
<dbReference type="Proteomes" id="UP000006731">
    <property type="component" value="Chromosome"/>
</dbReference>
<dbReference type="GO" id="GO:0005829">
    <property type="term" value="C:cytosol"/>
    <property type="evidence" value="ECO:0007669"/>
    <property type="project" value="TreeGrafter"/>
</dbReference>
<dbReference type="GO" id="GO:0051539">
    <property type="term" value="F:4 iron, 4 sulfur cluster binding"/>
    <property type="evidence" value="ECO:0007669"/>
    <property type="project" value="UniProtKB-UniRule"/>
</dbReference>
<dbReference type="GO" id="GO:0046872">
    <property type="term" value="F:metal ion binding"/>
    <property type="evidence" value="ECO:0007669"/>
    <property type="project" value="UniProtKB-KW"/>
</dbReference>
<dbReference type="GO" id="GO:0035597">
    <property type="term" value="F:N6-isopentenyladenosine methylthiotransferase activity"/>
    <property type="evidence" value="ECO:0007669"/>
    <property type="project" value="TreeGrafter"/>
</dbReference>
<dbReference type="CDD" id="cd01335">
    <property type="entry name" value="Radical_SAM"/>
    <property type="match status" value="1"/>
</dbReference>
<dbReference type="FunFam" id="3.40.50.12160:FF:000003">
    <property type="entry name" value="CDK5 regulatory subunit-associated protein 1"/>
    <property type="match status" value="1"/>
</dbReference>
<dbReference type="FunFam" id="3.80.30.20:FF:000005">
    <property type="entry name" value="tRNA-2-methylthio-N(6)-dimethylallyladenosine synthase"/>
    <property type="match status" value="1"/>
</dbReference>
<dbReference type="Gene3D" id="3.40.50.12160">
    <property type="entry name" value="Methylthiotransferase, N-terminal domain"/>
    <property type="match status" value="1"/>
</dbReference>
<dbReference type="Gene3D" id="2.40.50.140">
    <property type="entry name" value="Nucleic acid-binding proteins"/>
    <property type="match status" value="1"/>
</dbReference>
<dbReference type="Gene3D" id="3.80.30.20">
    <property type="entry name" value="tm_1862 like domain"/>
    <property type="match status" value="1"/>
</dbReference>
<dbReference type="HAMAP" id="MF_01864">
    <property type="entry name" value="tRNA_metthiotr_MiaB"/>
    <property type="match status" value="1"/>
</dbReference>
<dbReference type="InterPro" id="IPR006638">
    <property type="entry name" value="Elp3/MiaA/NifB-like_rSAM"/>
</dbReference>
<dbReference type="InterPro" id="IPR005839">
    <property type="entry name" value="Methylthiotransferase"/>
</dbReference>
<dbReference type="InterPro" id="IPR020612">
    <property type="entry name" value="Methylthiotransferase_CS"/>
</dbReference>
<dbReference type="InterPro" id="IPR013848">
    <property type="entry name" value="Methylthiotransferase_N"/>
</dbReference>
<dbReference type="InterPro" id="IPR038135">
    <property type="entry name" value="Methylthiotransferase_N_sf"/>
</dbReference>
<dbReference type="InterPro" id="IPR006463">
    <property type="entry name" value="MiaB_methiolase"/>
</dbReference>
<dbReference type="InterPro" id="IPR012340">
    <property type="entry name" value="NA-bd_OB-fold"/>
</dbReference>
<dbReference type="InterPro" id="IPR007197">
    <property type="entry name" value="rSAM"/>
</dbReference>
<dbReference type="InterPro" id="IPR023404">
    <property type="entry name" value="rSAM_horseshoe"/>
</dbReference>
<dbReference type="InterPro" id="IPR002792">
    <property type="entry name" value="TRAM_dom"/>
</dbReference>
<dbReference type="NCBIfam" id="TIGR01574">
    <property type="entry name" value="miaB-methiolase"/>
    <property type="match status" value="1"/>
</dbReference>
<dbReference type="NCBIfam" id="TIGR00089">
    <property type="entry name" value="MiaB/RimO family radical SAM methylthiotransferase"/>
    <property type="match status" value="1"/>
</dbReference>
<dbReference type="PANTHER" id="PTHR43020">
    <property type="entry name" value="CDK5 REGULATORY SUBUNIT-ASSOCIATED PROTEIN 1"/>
    <property type="match status" value="1"/>
</dbReference>
<dbReference type="PANTHER" id="PTHR43020:SF2">
    <property type="entry name" value="MITOCHONDRIAL TRNA METHYLTHIOTRANSFERASE CDK5RAP1"/>
    <property type="match status" value="1"/>
</dbReference>
<dbReference type="Pfam" id="PF04055">
    <property type="entry name" value="Radical_SAM"/>
    <property type="match status" value="1"/>
</dbReference>
<dbReference type="Pfam" id="PF01938">
    <property type="entry name" value="TRAM"/>
    <property type="match status" value="1"/>
</dbReference>
<dbReference type="Pfam" id="PF00919">
    <property type="entry name" value="UPF0004"/>
    <property type="match status" value="1"/>
</dbReference>
<dbReference type="SFLD" id="SFLDF00273">
    <property type="entry name" value="(dimethylallyl)adenosine_tRNA"/>
    <property type="match status" value="1"/>
</dbReference>
<dbReference type="SFLD" id="SFLDG01082">
    <property type="entry name" value="B12-binding_domain_containing"/>
    <property type="match status" value="1"/>
</dbReference>
<dbReference type="SFLD" id="SFLDF00413">
    <property type="entry name" value="CDK5RAP1"/>
    <property type="match status" value="1"/>
</dbReference>
<dbReference type="SFLD" id="SFLDS00029">
    <property type="entry name" value="Radical_SAM"/>
    <property type="match status" value="1"/>
</dbReference>
<dbReference type="SMART" id="SM00729">
    <property type="entry name" value="Elp3"/>
    <property type="match status" value="1"/>
</dbReference>
<dbReference type="SUPFAM" id="SSF102114">
    <property type="entry name" value="Radical SAM enzymes"/>
    <property type="match status" value="1"/>
</dbReference>
<dbReference type="PROSITE" id="PS51449">
    <property type="entry name" value="MTTASE_N"/>
    <property type="match status" value="1"/>
</dbReference>
<dbReference type="PROSITE" id="PS01278">
    <property type="entry name" value="MTTASE_RADICAL"/>
    <property type="match status" value="1"/>
</dbReference>
<dbReference type="PROSITE" id="PS51918">
    <property type="entry name" value="RADICAL_SAM"/>
    <property type="match status" value="1"/>
</dbReference>
<dbReference type="PROSITE" id="PS50926">
    <property type="entry name" value="TRAM"/>
    <property type="match status" value="1"/>
</dbReference>
<comment type="function">
    <text evidence="1">Catalyzes the methylthiolation of N6-(dimethylallyl)adenosine (i(6)A), leading to the formation of 2-methylthio-N6-(dimethylallyl)adenosine (ms(2)i(6)A) at position 37 in tRNAs that read codons beginning with uridine.</text>
</comment>
<comment type="catalytic activity">
    <reaction evidence="1">
        <text>N(6)-dimethylallyladenosine(37) in tRNA + (sulfur carrier)-SH + AH2 + 2 S-adenosyl-L-methionine = 2-methylsulfanyl-N(6)-dimethylallyladenosine(37) in tRNA + (sulfur carrier)-H + 5'-deoxyadenosine + L-methionine + A + S-adenosyl-L-homocysteine + 2 H(+)</text>
        <dbReference type="Rhea" id="RHEA:37067"/>
        <dbReference type="Rhea" id="RHEA-COMP:10375"/>
        <dbReference type="Rhea" id="RHEA-COMP:10376"/>
        <dbReference type="Rhea" id="RHEA-COMP:14737"/>
        <dbReference type="Rhea" id="RHEA-COMP:14739"/>
        <dbReference type="ChEBI" id="CHEBI:13193"/>
        <dbReference type="ChEBI" id="CHEBI:15378"/>
        <dbReference type="ChEBI" id="CHEBI:17319"/>
        <dbReference type="ChEBI" id="CHEBI:17499"/>
        <dbReference type="ChEBI" id="CHEBI:29917"/>
        <dbReference type="ChEBI" id="CHEBI:57844"/>
        <dbReference type="ChEBI" id="CHEBI:57856"/>
        <dbReference type="ChEBI" id="CHEBI:59789"/>
        <dbReference type="ChEBI" id="CHEBI:64428"/>
        <dbReference type="ChEBI" id="CHEBI:74415"/>
        <dbReference type="ChEBI" id="CHEBI:74417"/>
        <dbReference type="EC" id="2.8.4.3"/>
    </reaction>
</comment>
<comment type="cofactor">
    <cofactor evidence="1">
        <name>[4Fe-4S] cluster</name>
        <dbReference type="ChEBI" id="CHEBI:49883"/>
    </cofactor>
    <text evidence="1">Binds 2 [4Fe-4S] clusters. One cluster is coordinated with 3 cysteines and an exchangeable S-adenosyl-L-methionine.</text>
</comment>
<comment type="subunit">
    <text evidence="1">Monomer.</text>
</comment>
<comment type="subcellular location">
    <subcellularLocation>
        <location evidence="1">Cytoplasm</location>
    </subcellularLocation>
</comment>
<comment type="similarity">
    <text evidence="1">Belongs to the methylthiotransferase family. MiaB subfamily.</text>
</comment>
<name>MIAB_BACFN</name>
<feature type="chain" id="PRO_0000374141" description="tRNA-2-methylthio-N(6)-dimethylallyladenosine synthase">
    <location>
        <begin position="1"/>
        <end position="457"/>
    </location>
</feature>
<feature type="domain" description="MTTase N-terminal" evidence="1">
    <location>
        <begin position="18"/>
        <end position="133"/>
    </location>
</feature>
<feature type="domain" description="Radical SAM core" evidence="2">
    <location>
        <begin position="157"/>
        <end position="390"/>
    </location>
</feature>
<feature type="domain" description="TRAM" evidence="1">
    <location>
        <begin position="393"/>
        <end position="456"/>
    </location>
</feature>
<feature type="binding site" evidence="1">
    <location>
        <position position="27"/>
    </location>
    <ligand>
        <name>[4Fe-4S] cluster</name>
        <dbReference type="ChEBI" id="CHEBI:49883"/>
        <label>1</label>
    </ligand>
</feature>
<feature type="binding site" evidence="1">
    <location>
        <position position="63"/>
    </location>
    <ligand>
        <name>[4Fe-4S] cluster</name>
        <dbReference type="ChEBI" id="CHEBI:49883"/>
        <label>1</label>
    </ligand>
</feature>
<feature type="binding site" evidence="1">
    <location>
        <position position="97"/>
    </location>
    <ligand>
        <name>[4Fe-4S] cluster</name>
        <dbReference type="ChEBI" id="CHEBI:49883"/>
        <label>1</label>
    </ligand>
</feature>
<feature type="binding site" evidence="1">
    <location>
        <position position="171"/>
    </location>
    <ligand>
        <name>[4Fe-4S] cluster</name>
        <dbReference type="ChEBI" id="CHEBI:49883"/>
        <label>2</label>
        <note>4Fe-4S-S-AdoMet</note>
    </ligand>
</feature>
<feature type="binding site" evidence="1">
    <location>
        <position position="175"/>
    </location>
    <ligand>
        <name>[4Fe-4S] cluster</name>
        <dbReference type="ChEBI" id="CHEBI:49883"/>
        <label>2</label>
        <note>4Fe-4S-S-AdoMet</note>
    </ligand>
</feature>
<feature type="binding site" evidence="1">
    <location>
        <position position="178"/>
    </location>
    <ligand>
        <name>[4Fe-4S] cluster</name>
        <dbReference type="ChEBI" id="CHEBI:49883"/>
        <label>2</label>
        <note>4Fe-4S-S-AdoMet</note>
    </ligand>
</feature>
<gene>
    <name evidence="1" type="primary">miaB</name>
    <name type="ordered locus">BF0027</name>
</gene>
<keyword id="KW-0004">4Fe-4S</keyword>
<keyword id="KW-0963">Cytoplasm</keyword>
<keyword id="KW-0408">Iron</keyword>
<keyword id="KW-0411">Iron-sulfur</keyword>
<keyword id="KW-0479">Metal-binding</keyword>
<keyword id="KW-0949">S-adenosyl-L-methionine</keyword>
<keyword id="KW-0808">Transferase</keyword>
<keyword id="KW-0819">tRNA processing</keyword>
<reference key="1">
    <citation type="journal article" date="2005" name="Science">
        <title>Extensive DNA inversions in the B. fragilis genome control variable gene expression.</title>
        <authorList>
            <person name="Cerdeno-Tarraga A.-M."/>
            <person name="Patrick S."/>
            <person name="Crossman L.C."/>
            <person name="Blakely G."/>
            <person name="Abratt V."/>
            <person name="Lennard N."/>
            <person name="Poxton I."/>
            <person name="Duerden B."/>
            <person name="Harris B."/>
            <person name="Quail M.A."/>
            <person name="Barron A."/>
            <person name="Clark L."/>
            <person name="Corton C."/>
            <person name="Doggett J."/>
            <person name="Holden M.T.G."/>
            <person name="Larke N."/>
            <person name="Line A."/>
            <person name="Lord A."/>
            <person name="Norbertczak H."/>
            <person name="Ormond D."/>
            <person name="Price C."/>
            <person name="Rabbinowitsch E."/>
            <person name="Woodward J."/>
            <person name="Barrell B.G."/>
            <person name="Parkhill J."/>
        </authorList>
    </citation>
    <scope>NUCLEOTIDE SEQUENCE [LARGE SCALE GENOMIC DNA]</scope>
    <source>
        <strain>ATCC 25285 / DSM 2151 / CCUG 4856 / JCM 11019 / LMG 10263 / NCTC 9343 / Onslow / VPI 2553 / EN-2</strain>
    </source>
</reference>
<sequence>MNELTGADFKSATADDNKKLFIETYGCQMNVADSEVIASVMQMAGYSVAETLEEADAVFMNTCSIRDNAEQKILNRLEFFHSMKKKKKHLIVGVLGCMAERVKDDLIEHHHVDLVVGPDAYLTLPELIASVEAGEKAMNVELSTTETYRDVIPSRICGNHISGFVSIMRGCNNFCTYCIVPYTRGRERSRDVESILNEVADLVSKGYKEITLLGQNVNSYRFEKEGGEVVTFPMLLRLVAEAAPGIRVRFTTSHPKDMSDETLEVIAQVPNVCKHIHLPVQSGSSRILKLMNRKYTREWYLDRVAAIKRIVPDCGLTTDIFSGFHSETEEDHRESLSLMEACGYDAAFMFKYSERPGTYASKHLEDNVPEEIKVRRLNEIIALQNRLSAESNNRCIGKTYEVLVEGVSKRSRDQLFGRTEQNRVVVFDRGTHRIGDFVNVRITEASSATLKGEEVFS</sequence>
<protein>
    <recommendedName>
        <fullName evidence="1">tRNA-2-methylthio-N(6)-dimethylallyladenosine synthase</fullName>
        <ecNumber evidence="1">2.8.4.3</ecNumber>
    </recommendedName>
    <alternativeName>
        <fullName evidence="1">(Dimethylallyl)adenosine tRNA methylthiotransferase MiaB</fullName>
    </alternativeName>
    <alternativeName>
        <fullName evidence="1">tRNA-i(6)A37 methylthiotransferase</fullName>
    </alternativeName>
</protein>
<proteinExistence type="inferred from homology"/>
<accession>Q5LJ70</accession>